<accession>Q99PS1</accession>
<keyword id="KW-0037">Angiogenesis</keyword>
<keyword id="KW-0217">Developmental protein</keyword>
<keyword id="KW-0221">Differentiation</keyword>
<keyword id="KW-1015">Disulfide bond</keyword>
<keyword id="KW-0325">Glycoprotein</keyword>
<keyword id="KW-0339">Growth factor</keyword>
<keyword id="KW-0358">Heparin-binding</keyword>
<keyword id="KW-0497">Mitogen</keyword>
<keyword id="KW-1185">Reference proteome</keyword>
<keyword id="KW-0964">Secreted</keyword>
<keyword id="KW-0732">Signal</keyword>
<dbReference type="EMBL" id="AF063013">
    <property type="protein sequence ID" value="AAK00049.1"/>
    <property type="molecule type" value="mRNA"/>
</dbReference>
<dbReference type="RefSeq" id="NP_001268772.1">
    <property type="nucleotide sequence ID" value="NM_001281843.1"/>
</dbReference>
<dbReference type="SMR" id="Q99PS1"/>
<dbReference type="STRING" id="10036.ENSMAUP00000005306"/>
<dbReference type="GlyCosmos" id="Q99PS1">
    <property type="glycosylation" value="1 site, No reported glycans"/>
</dbReference>
<dbReference type="GeneID" id="101839822"/>
<dbReference type="KEGG" id="maua:101839822"/>
<dbReference type="CTD" id="7422"/>
<dbReference type="eggNOG" id="ENOG502QVI8">
    <property type="taxonomic scope" value="Eukaryota"/>
</dbReference>
<dbReference type="OrthoDB" id="6370328at2759"/>
<dbReference type="Proteomes" id="UP000189706">
    <property type="component" value="Unplaced"/>
</dbReference>
<dbReference type="GO" id="GO:0005615">
    <property type="term" value="C:extracellular space"/>
    <property type="evidence" value="ECO:0007669"/>
    <property type="project" value="TreeGrafter"/>
</dbReference>
<dbReference type="GO" id="GO:0016020">
    <property type="term" value="C:membrane"/>
    <property type="evidence" value="ECO:0007669"/>
    <property type="project" value="InterPro"/>
</dbReference>
<dbReference type="GO" id="GO:0042056">
    <property type="term" value="F:chemoattractant activity"/>
    <property type="evidence" value="ECO:0007669"/>
    <property type="project" value="TreeGrafter"/>
</dbReference>
<dbReference type="GO" id="GO:0008083">
    <property type="term" value="F:growth factor activity"/>
    <property type="evidence" value="ECO:0007669"/>
    <property type="project" value="UniProtKB-KW"/>
</dbReference>
<dbReference type="GO" id="GO:0008201">
    <property type="term" value="F:heparin binding"/>
    <property type="evidence" value="ECO:0007669"/>
    <property type="project" value="UniProtKB-KW"/>
</dbReference>
<dbReference type="GO" id="GO:0005172">
    <property type="term" value="F:vascular endothelial growth factor receptor binding"/>
    <property type="evidence" value="ECO:0007669"/>
    <property type="project" value="TreeGrafter"/>
</dbReference>
<dbReference type="GO" id="GO:0050930">
    <property type="term" value="P:induction of positive chemotaxis"/>
    <property type="evidence" value="ECO:0007669"/>
    <property type="project" value="TreeGrafter"/>
</dbReference>
<dbReference type="GO" id="GO:0097475">
    <property type="term" value="P:motor neuron migration"/>
    <property type="evidence" value="ECO:0000250"/>
    <property type="project" value="UniProtKB"/>
</dbReference>
<dbReference type="GO" id="GO:0045766">
    <property type="term" value="P:positive regulation of angiogenesis"/>
    <property type="evidence" value="ECO:0000250"/>
    <property type="project" value="UniProtKB"/>
</dbReference>
<dbReference type="GO" id="GO:0051781">
    <property type="term" value="P:positive regulation of cell division"/>
    <property type="evidence" value="ECO:0007669"/>
    <property type="project" value="UniProtKB-KW"/>
</dbReference>
<dbReference type="GO" id="GO:0010595">
    <property type="term" value="P:positive regulation of endothelial cell migration"/>
    <property type="evidence" value="ECO:0000250"/>
    <property type="project" value="UniProtKB"/>
</dbReference>
<dbReference type="GO" id="GO:0001938">
    <property type="term" value="P:positive regulation of endothelial cell proliferation"/>
    <property type="evidence" value="ECO:0000250"/>
    <property type="project" value="UniProtKB"/>
</dbReference>
<dbReference type="GO" id="GO:0051894">
    <property type="term" value="P:positive regulation of focal adhesion assembly"/>
    <property type="evidence" value="ECO:0000250"/>
    <property type="project" value="UniProtKB"/>
</dbReference>
<dbReference type="GO" id="GO:0060754">
    <property type="term" value="P:positive regulation of mast cell chemotaxis"/>
    <property type="evidence" value="ECO:0007669"/>
    <property type="project" value="TreeGrafter"/>
</dbReference>
<dbReference type="GO" id="GO:0050731">
    <property type="term" value="P:positive regulation of peptidyl-tyrosine phosphorylation"/>
    <property type="evidence" value="ECO:0000250"/>
    <property type="project" value="UniProtKB"/>
</dbReference>
<dbReference type="GO" id="GO:0001934">
    <property type="term" value="P:positive regulation of protein phosphorylation"/>
    <property type="evidence" value="ECO:0000250"/>
    <property type="project" value="UniProtKB"/>
</dbReference>
<dbReference type="GO" id="GO:0031334">
    <property type="term" value="P:positive regulation of protein-containing complex assembly"/>
    <property type="evidence" value="ECO:0000250"/>
    <property type="project" value="UniProtKB"/>
</dbReference>
<dbReference type="GO" id="GO:0001666">
    <property type="term" value="P:response to hypoxia"/>
    <property type="evidence" value="ECO:0007669"/>
    <property type="project" value="TreeGrafter"/>
</dbReference>
<dbReference type="GO" id="GO:0002040">
    <property type="term" value="P:sprouting angiogenesis"/>
    <property type="evidence" value="ECO:0007669"/>
    <property type="project" value="TreeGrafter"/>
</dbReference>
<dbReference type="GO" id="GO:0035148">
    <property type="term" value="P:tube formation"/>
    <property type="evidence" value="ECO:0000250"/>
    <property type="project" value="UniProtKB"/>
</dbReference>
<dbReference type="GO" id="GO:0048010">
    <property type="term" value="P:vascular endothelial growth factor receptor signaling pathway"/>
    <property type="evidence" value="ECO:0007669"/>
    <property type="project" value="TreeGrafter"/>
</dbReference>
<dbReference type="GO" id="GO:0038084">
    <property type="term" value="P:vascular endothelial growth factor signaling pathway"/>
    <property type="evidence" value="ECO:0007669"/>
    <property type="project" value="TreeGrafter"/>
</dbReference>
<dbReference type="CDD" id="cd00135">
    <property type="entry name" value="PDGF"/>
    <property type="match status" value="1"/>
</dbReference>
<dbReference type="FunFam" id="2.10.160.10:FF:000001">
    <property type="entry name" value="Vascular endothelial growth factor A"/>
    <property type="match status" value="1"/>
</dbReference>
<dbReference type="FunFam" id="2.10.90.10:FF:000009">
    <property type="entry name" value="Vascular endothelial growth factor A"/>
    <property type="match status" value="1"/>
</dbReference>
<dbReference type="Gene3D" id="2.10.90.10">
    <property type="entry name" value="Cystine-knot cytokines"/>
    <property type="match status" value="1"/>
</dbReference>
<dbReference type="Gene3D" id="2.10.160.10">
    <property type="entry name" value="Vascular endothelial growth factor, heparin-binding domain"/>
    <property type="match status" value="1"/>
</dbReference>
<dbReference type="InterPro" id="IPR029034">
    <property type="entry name" value="Cystine-knot_cytokine"/>
</dbReference>
<dbReference type="InterPro" id="IPR023581">
    <property type="entry name" value="PD_growth_factor_CS"/>
</dbReference>
<dbReference type="InterPro" id="IPR000072">
    <property type="entry name" value="PDGF/VEGF_dom"/>
</dbReference>
<dbReference type="InterPro" id="IPR050507">
    <property type="entry name" value="PDGF/VEGF_growth_factor"/>
</dbReference>
<dbReference type="InterPro" id="IPR027928">
    <property type="entry name" value="VEGF_C"/>
</dbReference>
<dbReference type="InterPro" id="IPR036841">
    <property type="entry name" value="VEGF_C_sf"/>
</dbReference>
<dbReference type="PANTHER" id="PTHR12025">
    <property type="entry name" value="VASCULAR ENDOTHELIAL GROWTH FACTOR"/>
    <property type="match status" value="1"/>
</dbReference>
<dbReference type="PANTHER" id="PTHR12025:SF5">
    <property type="entry name" value="VASCULAR ENDOTHELIAL GROWTH FACTOR A, LONG FORM"/>
    <property type="match status" value="1"/>
</dbReference>
<dbReference type="Pfam" id="PF00341">
    <property type="entry name" value="PDGF"/>
    <property type="match status" value="1"/>
</dbReference>
<dbReference type="Pfam" id="PF14554">
    <property type="entry name" value="VEGF_C"/>
    <property type="match status" value="1"/>
</dbReference>
<dbReference type="SMART" id="SM00141">
    <property type="entry name" value="PDGF"/>
    <property type="match status" value="1"/>
</dbReference>
<dbReference type="SUPFAM" id="SSF57501">
    <property type="entry name" value="Cystine-knot cytokines"/>
    <property type="match status" value="1"/>
</dbReference>
<dbReference type="SUPFAM" id="SSF57593">
    <property type="entry name" value="Heparin-binding domain from vascular endothelial growth factor"/>
    <property type="match status" value="1"/>
</dbReference>
<dbReference type="PROSITE" id="PS00249">
    <property type="entry name" value="PDGF_1"/>
    <property type="match status" value="1"/>
</dbReference>
<dbReference type="PROSITE" id="PS50278">
    <property type="entry name" value="PDGF_2"/>
    <property type="match status" value="1"/>
</dbReference>
<organism>
    <name type="scientific">Mesocricetus auratus</name>
    <name type="common">Golden hamster</name>
    <dbReference type="NCBI Taxonomy" id="10036"/>
    <lineage>
        <taxon>Eukaryota</taxon>
        <taxon>Metazoa</taxon>
        <taxon>Chordata</taxon>
        <taxon>Craniata</taxon>
        <taxon>Vertebrata</taxon>
        <taxon>Euteleostomi</taxon>
        <taxon>Mammalia</taxon>
        <taxon>Eutheria</taxon>
        <taxon>Euarchontoglires</taxon>
        <taxon>Glires</taxon>
        <taxon>Rodentia</taxon>
        <taxon>Myomorpha</taxon>
        <taxon>Muroidea</taxon>
        <taxon>Cricetidae</taxon>
        <taxon>Cricetinae</taxon>
        <taxon>Mesocricetus</taxon>
    </lineage>
</organism>
<feature type="signal peptide" evidence="1">
    <location>
        <begin position="1"/>
        <end position="26"/>
    </location>
</feature>
<feature type="chain" id="PRO_0000023387" description="Vascular endothelial growth factor A">
    <location>
        <begin position="27"/>
        <end position="190"/>
    </location>
</feature>
<feature type="glycosylation site" description="N-linked (GlcNAc...) asparagine" evidence="5">
    <location>
        <position position="100"/>
    </location>
</feature>
<feature type="disulfide bond" evidence="1">
    <location>
        <begin position="51"/>
        <end position="93"/>
    </location>
</feature>
<feature type="disulfide bond" description="Interchain" evidence="1">
    <location>
        <position position="76"/>
    </location>
</feature>
<feature type="disulfide bond" evidence="1">
    <location>
        <begin position="82"/>
        <end position="127"/>
    </location>
</feature>
<feature type="disulfide bond" description="Interchain" evidence="1">
    <location>
        <position position="85"/>
    </location>
</feature>
<feature type="disulfide bond" evidence="1">
    <location>
        <begin position="86"/>
        <end position="129"/>
    </location>
</feature>
<sequence length="190" mass="22277">MNFLLSWVHWTLALLLYLHHAKWSQAAPTTEGEQKAHGVVEFMDVYRRSYCHPIETLVDIFQEYPDEIEYIFKPSCVPLMRCGGCCSDEALECVPTSESNITMQIMRVKPHQSQHIGEMSFLQHSRCECRPKKVRTKPENHCEPCSERRKHLFVQDPQTCKCSCKNTDSRCKARQLELNERTCRCDKPRR</sequence>
<comment type="function">
    <text evidence="2 4">Growth factor active in angiogenesis, vasculogenesis and endothelial cell growth. Induces endothelial cell proliferation, promotes cell migration, inhibits apoptosis and induces permeabilization of blood vessels. Binds to the FLT1/VEGFR1 and KDR/VEGFR2 receptors, heparan sulfate and heparin (By similarity). Binding to NRP1 receptor initiates a signaling pathway needed for motor neuron axon guidance and cell body migration, including for the caudal migration of facial motor neurons from rhombomere 4 to rhombomere 6 during embryonic development (By similarity). Also binds the DEAR/FBXW7-AS1 receptor (By similarity).</text>
</comment>
<comment type="subunit">
    <text evidence="2 3">Homodimer; disulfide-linked (By similarity). Also found as heterodimer with PGF (By similarity). Interacts with NRP1. Interacts with isoform 2 of BSG. Interacts with CD82; this interaction inhibits VEGFA-mediated signaling pathway (By similarity).</text>
</comment>
<comment type="subcellular location">
    <subcellularLocation>
        <location evidence="1">Secreted</location>
    </subcellularLocation>
    <text evidence="1">Secreted but remains associated to cells or to the extracellular matrix unless released by heparin.</text>
</comment>
<comment type="similarity">
    <text evidence="6">Belongs to the PDGF/VEGF growth factor family.</text>
</comment>
<evidence type="ECO:0000250" key="1"/>
<evidence type="ECO:0000250" key="2">
    <source>
        <dbReference type="UniProtKB" id="P15692"/>
    </source>
</evidence>
<evidence type="ECO:0000250" key="3">
    <source>
        <dbReference type="UniProtKB" id="P16612"/>
    </source>
</evidence>
<evidence type="ECO:0000250" key="4">
    <source>
        <dbReference type="UniProtKB" id="Q00731"/>
    </source>
</evidence>
<evidence type="ECO:0000255" key="5"/>
<evidence type="ECO:0000305" key="6"/>
<proteinExistence type="evidence at transcript level"/>
<reference key="1">
    <citation type="journal article" date="1999" name="Cell Tissue Res.">
        <title>Expression of vascular endothelial growth factor (VEGF) and its receptors during embryonic implantation in the golden hamster (Mesocricetus auratus).</title>
        <authorList>
            <person name="Yi X.J."/>
            <person name="Jiang H.Y."/>
            <person name="Lee K.K."/>
            <person name="Tang P.L."/>
            <person name="Chow P.H."/>
        </authorList>
    </citation>
    <scope>NUCLEOTIDE SEQUENCE [MRNA]</scope>
    <source>
        <tissue>Decidua</tissue>
        <tissue>Embryo</tissue>
    </source>
</reference>
<name>VEGFA_MESAU</name>
<gene>
    <name type="primary">VEGFA</name>
    <name type="synonym">VEGF</name>
</gene>
<protein>
    <recommendedName>
        <fullName>Vascular endothelial growth factor A</fullName>
        <shortName>VEGF-A</shortName>
    </recommendedName>
    <alternativeName>
        <fullName>Vascular permeability factor</fullName>
        <shortName>VPF</shortName>
    </alternativeName>
</protein>